<dbReference type="EMBL" id="AY859723">
    <property type="protein sequence ID" value="AAW50951.1"/>
    <property type="molecule type" value="mRNA"/>
</dbReference>
<dbReference type="RefSeq" id="XP_013977197.1">
    <property type="nucleotide sequence ID" value="XM_014121722.1"/>
</dbReference>
<dbReference type="SMR" id="Q5I2M8"/>
<dbReference type="FunCoup" id="Q5I2M8">
    <property type="interactions" value="66"/>
</dbReference>
<dbReference type="STRING" id="9615.ENSCAFP00000030804"/>
<dbReference type="GlyCosmos" id="Q5I2M8">
    <property type="glycosylation" value="13 sites, No reported glycans"/>
</dbReference>
<dbReference type="PaxDb" id="9612-ENSCAFP00000030804"/>
<dbReference type="Ensembl" id="ENSCAFT00000035532.4">
    <property type="protein sequence ID" value="ENSCAFP00000030804.2"/>
    <property type="gene ID" value="ENSCAFG00000023201.4"/>
</dbReference>
<dbReference type="Ensembl" id="ENSCAFT00030014603.1">
    <property type="protein sequence ID" value="ENSCAFP00030012737.1"/>
    <property type="gene ID" value="ENSCAFG00030007955.1"/>
</dbReference>
<dbReference type="eggNOG" id="KOG4641">
    <property type="taxonomic scope" value="Eukaryota"/>
</dbReference>
<dbReference type="HOGENOM" id="CLU_006000_2_0_1"/>
<dbReference type="InParanoid" id="Q5I2M8"/>
<dbReference type="OMA" id="YNQNFCR"/>
<dbReference type="TreeFam" id="TF325595"/>
<dbReference type="Reactome" id="R-CFA-109704">
    <property type="pathway name" value="PI3K Cascade"/>
</dbReference>
<dbReference type="Reactome" id="R-CFA-1679131">
    <property type="pathway name" value="Trafficking and processing of endosomal TLR"/>
</dbReference>
<dbReference type="Reactome" id="R-CFA-168138">
    <property type="pathway name" value="Toll Like Receptor 9 (TLR9) Cascade"/>
</dbReference>
<dbReference type="Proteomes" id="UP000002254">
    <property type="component" value="Chromosome 20"/>
</dbReference>
<dbReference type="Proteomes" id="UP000694429">
    <property type="component" value="Chromosome 20"/>
</dbReference>
<dbReference type="Proteomes" id="UP000694542">
    <property type="component" value="Unplaced"/>
</dbReference>
<dbReference type="Proteomes" id="UP000805418">
    <property type="component" value="Unplaced"/>
</dbReference>
<dbReference type="Bgee" id="ENSCAFG00000023201">
    <property type="expression patterns" value="Expressed in granulocyte and 22 other cell types or tissues"/>
</dbReference>
<dbReference type="GO" id="GO:0032009">
    <property type="term" value="C:early phagosome"/>
    <property type="evidence" value="ECO:0000250"/>
    <property type="project" value="UniProtKB"/>
</dbReference>
<dbReference type="GO" id="GO:0036019">
    <property type="term" value="C:endolysosome"/>
    <property type="evidence" value="ECO:0000250"/>
    <property type="project" value="UniProtKB"/>
</dbReference>
<dbReference type="GO" id="GO:0005783">
    <property type="term" value="C:endoplasmic reticulum"/>
    <property type="evidence" value="ECO:0000250"/>
    <property type="project" value="UniProtKB"/>
</dbReference>
<dbReference type="GO" id="GO:0005789">
    <property type="term" value="C:endoplasmic reticulum membrane"/>
    <property type="evidence" value="ECO:0007669"/>
    <property type="project" value="UniProtKB-SubCell"/>
</dbReference>
<dbReference type="GO" id="GO:0005768">
    <property type="term" value="C:endosome"/>
    <property type="evidence" value="ECO:0000250"/>
    <property type="project" value="UniProtKB"/>
</dbReference>
<dbReference type="GO" id="GO:0005764">
    <property type="term" value="C:lysosome"/>
    <property type="evidence" value="ECO:0000250"/>
    <property type="project" value="UniProtKB"/>
</dbReference>
<dbReference type="GO" id="GO:0005886">
    <property type="term" value="C:plasma membrane"/>
    <property type="evidence" value="ECO:0000318"/>
    <property type="project" value="GO_Central"/>
</dbReference>
<dbReference type="GO" id="GO:0038187">
    <property type="term" value="F:pattern recognition receptor activity"/>
    <property type="evidence" value="ECO:0000250"/>
    <property type="project" value="UniProtKB"/>
</dbReference>
<dbReference type="GO" id="GO:0042803">
    <property type="term" value="F:protein homodimerization activity"/>
    <property type="evidence" value="ECO:0000250"/>
    <property type="project" value="UniProtKB"/>
</dbReference>
<dbReference type="GO" id="GO:0035197">
    <property type="term" value="F:siRNA binding"/>
    <property type="evidence" value="ECO:0000250"/>
    <property type="project" value="UniProtKB"/>
</dbReference>
<dbReference type="GO" id="GO:0045322">
    <property type="term" value="F:unmethylated CpG binding"/>
    <property type="evidence" value="ECO:0000250"/>
    <property type="project" value="UniProtKB"/>
</dbReference>
<dbReference type="GO" id="GO:0007249">
    <property type="term" value="P:canonical NF-kappaB signal transduction"/>
    <property type="evidence" value="ECO:0000318"/>
    <property type="project" value="GO_Central"/>
</dbReference>
<dbReference type="GO" id="GO:0051607">
    <property type="term" value="P:defense response to virus"/>
    <property type="evidence" value="ECO:0000318"/>
    <property type="project" value="GO_Central"/>
</dbReference>
<dbReference type="GO" id="GO:0006954">
    <property type="term" value="P:inflammatory response"/>
    <property type="evidence" value="ECO:0007669"/>
    <property type="project" value="UniProtKB-KW"/>
</dbReference>
<dbReference type="GO" id="GO:0045087">
    <property type="term" value="P:innate immune response"/>
    <property type="evidence" value="ECO:0007669"/>
    <property type="project" value="UniProtKB-KW"/>
</dbReference>
<dbReference type="GO" id="GO:0050871">
    <property type="term" value="P:positive regulation of B cell activation"/>
    <property type="evidence" value="ECO:0000250"/>
    <property type="project" value="UniProtKB"/>
</dbReference>
<dbReference type="GO" id="GO:0030890">
    <property type="term" value="P:positive regulation of B cell proliferation"/>
    <property type="evidence" value="ECO:0000250"/>
    <property type="project" value="UniProtKB"/>
</dbReference>
<dbReference type="GO" id="GO:0002639">
    <property type="term" value="P:positive regulation of immunoglobulin production"/>
    <property type="evidence" value="ECO:0000250"/>
    <property type="project" value="UniProtKB"/>
</dbReference>
<dbReference type="GO" id="GO:0032727">
    <property type="term" value="P:positive regulation of interferon-alpha production"/>
    <property type="evidence" value="ECO:0000250"/>
    <property type="project" value="UniProtKB"/>
</dbReference>
<dbReference type="GO" id="GO:0032728">
    <property type="term" value="P:positive regulation of interferon-beta production"/>
    <property type="evidence" value="ECO:0000250"/>
    <property type="project" value="UniProtKB"/>
</dbReference>
<dbReference type="GO" id="GO:0032755">
    <property type="term" value="P:positive regulation of interleukin-6 production"/>
    <property type="evidence" value="ECO:0000318"/>
    <property type="project" value="GO_Central"/>
</dbReference>
<dbReference type="GO" id="GO:0043410">
    <property type="term" value="P:positive regulation of MAPK cascade"/>
    <property type="evidence" value="ECO:0000250"/>
    <property type="project" value="UniProtKB"/>
</dbReference>
<dbReference type="GO" id="GO:0034165">
    <property type="term" value="P:positive regulation of toll-like receptor 9 signaling pathway"/>
    <property type="evidence" value="ECO:0000250"/>
    <property type="project" value="UniProtKB"/>
</dbReference>
<dbReference type="GO" id="GO:0032729">
    <property type="term" value="P:positive regulation of type II interferon production"/>
    <property type="evidence" value="ECO:0000250"/>
    <property type="project" value="UniProtKB"/>
</dbReference>
<dbReference type="GO" id="GO:0045577">
    <property type="term" value="P:regulation of B cell differentiation"/>
    <property type="evidence" value="ECO:0000250"/>
    <property type="project" value="UniProtKB"/>
</dbReference>
<dbReference type="GO" id="GO:0002224">
    <property type="term" value="P:toll-like receptor signaling pathway"/>
    <property type="evidence" value="ECO:0000318"/>
    <property type="project" value="GO_Central"/>
</dbReference>
<dbReference type="FunFam" id="3.40.50.10140:FF:000003">
    <property type="entry name" value="Toll-like receptor 7"/>
    <property type="match status" value="1"/>
</dbReference>
<dbReference type="FunFam" id="3.80.10.10:FF:000037">
    <property type="entry name" value="Toll-like receptor 7"/>
    <property type="match status" value="1"/>
</dbReference>
<dbReference type="Gene3D" id="3.80.10.10">
    <property type="entry name" value="Ribonuclease Inhibitor"/>
    <property type="match status" value="1"/>
</dbReference>
<dbReference type="Gene3D" id="3.40.50.10140">
    <property type="entry name" value="Toll/interleukin-1 receptor homology (TIR) domain"/>
    <property type="match status" value="1"/>
</dbReference>
<dbReference type="InterPro" id="IPR001611">
    <property type="entry name" value="Leu-rich_rpt"/>
</dbReference>
<dbReference type="InterPro" id="IPR003591">
    <property type="entry name" value="Leu-rich_rpt_typical-subtyp"/>
</dbReference>
<dbReference type="InterPro" id="IPR041283">
    <property type="entry name" value="LRR_12"/>
</dbReference>
<dbReference type="InterPro" id="IPR032675">
    <property type="entry name" value="LRR_dom_sf"/>
</dbReference>
<dbReference type="InterPro" id="IPR000157">
    <property type="entry name" value="TIR_dom"/>
</dbReference>
<dbReference type="InterPro" id="IPR035897">
    <property type="entry name" value="Toll_tir_struct_dom_sf"/>
</dbReference>
<dbReference type="PANTHER" id="PTHR47410">
    <property type="entry name" value="TOLL-LIKE RECEPTOR 7-RELATED"/>
    <property type="match status" value="1"/>
</dbReference>
<dbReference type="PANTHER" id="PTHR47410:SF3">
    <property type="entry name" value="TOLL-LIKE RECEPTOR 9"/>
    <property type="match status" value="1"/>
</dbReference>
<dbReference type="Pfam" id="PF00560">
    <property type="entry name" value="LRR_1"/>
    <property type="match status" value="1"/>
</dbReference>
<dbReference type="Pfam" id="PF18837">
    <property type="entry name" value="LRR_12"/>
    <property type="match status" value="1"/>
</dbReference>
<dbReference type="Pfam" id="PF13855">
    <property type="entry name" value="LRR_8"/>
    <property type="match status" value="5"/>
</dbReference>
<dbReference type="Pfam" id="PF01582">
    <property type="entry name" value="TIR"/>
    <property type="match status" value="1"/>
</dbReference>
<dbReference type="PRINTS" id="PR00019">
    <property type="entry name" value="LEURICHRPT"/>
</dbReference>
<dbReference type="SMART" id="SM00364">
    <property type="entry name" value="LRR_BAC"/>
    <property type="match status" value="4"/>
</dbReference>
<dbReference type="SMART" id="SM00365">
    <property type="entry name" value="LRR_SD22"/>
    <property type="match status" value="4"/>
</dbReference>
<dbReference type="SMART" id="SM00369">
    <property type="entry name" value="LRR_TYP"/>
    <property type="match status" value="16"/>
</dbReference>
<dbReference type="SMART" id="SM00255">
    <property type="entry name" value="TIR"/>
    <property type="match status" value="1"/>
</dbReference>
<dbReference type="SUPFAM" id="SSF52058">
    <property type="entry name" value="L domain-like"/>
    <property type="match status" value="1"/>
</dbReference>
<dbReference type="SUPFAM" id="SSF52047">
    <property type="entry name" value="RNI-like"/>
    <property type="match status" value="1"/>
</dbReference>
<dbReference type="SUPFAM" id="SSF52200">
    <property type="entry name" value="Toll/Interleukin receptor TIR domain"/>
    <property type="match status" value="1"/>
</dbReference>
<dbReference type="PROSITE" id="PS51450">
    <property type="entry name" value="LRR"/>
    <property type="match status" value="18"/>
</dbReference>
<dbReference type="PROSITE" id="PS50104">
    <property type="entry name" value="TIR"/>
    <property type="match status" value="1"/>
</dbReference>
<keyword id="KW-0968">Cytoplasmic vesicle</keyword>
<keyword id="KW-1015">Disulfide bond</keyword>
<keyword id="KW-0256">Endoplasmic reticulum</keyword>
<keyword id="KW-0967">Endosome</keyword>
<keyword id="KW-0325">Glycoprotein</keyword>
<keyword id="KW-0391">Immunity</keyword>
<keyword id="KW-0395">Inflammatory response</keyword>
<keyword id="KW-0399">Innate immunity</keyword>
<keyword id="KW-0433">Leucine-rich repeat</keyword>
<keyword id="KW-0449">Lipoprotein</keyword>
<keyword id="KW-0458">Lysosome</keyword>
<keyword id="KW-0472">Membrane</keyword>
<keyword id="KW-0564">Palmitate</keyword>
<keyword id="KW-0675">Receptor</keyword>
<keyword id="KW-1185">Reference proteome</keyword>
<keyword id="KW-0677">Repeat</keyword>
<keyword id="KW-0732">Signal</keyword>
<keyword id="KW-0812">Transmembrane</keyword>
<keyword id="KW-1133">Transmembrane helix</keyword>
<reference key="1">
    <citation type="submission" date="2004-12" db="EMBL/GenBank/DDBJ databases">
        <title>Canis familiaris toll-like receptor 9 mRNA.</title>
        <authorList>
            <person name="Brownlie R."/>
            <person name="Mookherjee N."/>
            <person name="Mutwiri G."/>
            <person name="Babiuk L."/>
            <person name="Hecker R."/>
            <person name="Lipford G."/>
            <person name="Griebel P."/>
        </authorList>
    </citation>
    <scope>NUCLEOTIDE SEQUENCE [MRNA]</scope>
    <source>
        <tissue>Spleen</tissue>
    </source>
</reference>
<comment type="function">
    <text evidence="2 3">Key component of innate and adaptive immunity. TLRs (Toll-like receptors) control host immune response against pathogens through recognition of molecular patterns specific to microorganisms. TLR9 is a nucleotide-sensing TLR which is activated by unmethylated cytidine-phosphate-guanosine (CpG) dinucleotides. Acts via MYD88 and TRAF6, leading to NF-kappa-B activation, cytokine secretion and the inflammatory response. Upon CpG stimulation, induces B-cell proliferation, activation, survival and antibody production (By similarity).</text>
</comment>
<comment type="subunit">
    <text evidence="1 2 3">Monomer and homodimer. Exists as a monomer in the absence of unmethylated cytidine-phosphate-guanosine (CpG) ligand. Proteolytic processing of an insertion loop (Z-loop) is required for homodimerization upon binding to the unmethylated CpG ligand leading to its activation (By similarity). Interacts with MYD88 via their respective TIR domains (By similarity). Interacts with BTK (By similarity). Interacts (via transmembrane domain) with UNC93B1. Interacts with CD300LH; the interaction may promote full activation of TLR9-triggered innate responses. Interacts with CNPY3 and HSP90B1; this interaction is required for proper folding in the endoplasmic reticulum. Interacts with SMPDL3B (By similarity). Interacts with CD82; this interaction is essential for TLR9-dependent myddosome formation in response to CpG stimulation (By similarity).</text>
</comment>
<comment type="subcellular location">
    <subcellularLocation>
        <location evidence="2">Endoplasmic reticulum membrane</location>
        <topology evidence="2">Single-pass type I membrane protein</topology>
    </subcellularLocation>
    <subcellularLocation>
        <location evidence="2">Endosome</location>
    </subcellularLocation>
    <subcellularLocation>
        <location evidence="2">Lysosome</location>
    </subcellularLocation>
    <subcellularLocation>
        <location evidence="2">Cytoplasmic vesicle</location>
        <location evidence="2">Phagosome</location>
    </subcellularLocation>
    <text evidence="2">Relocalizes from endoplasmic reticulum to endosome and lysosome upon stimulation with agonist. Exit from the ER requires UNC93B1. Endolysosomal localization is required for proteolytic cleavage and subsequent activation. Intracellular localization of the active receptor may prevent from responding to self nucleic acid.</text>
</comment>
<comment type="PTM">
    <text evidence="2">Activated by proteolytic cleavage of the flexible loop between repeats LRR14 and LRR15 within the ectodomain. Cleavage requires UNC93B1. Proteolytically processed by first removing the majority of the ectodomain by either asparagine endopeptidase (AEP) or a cathepsin followed by a trimming event that is solely cathepsin mediated and required for optimal receptor signaling.</text>
</comment>
<comment type="PTM">
    <text evidence="3">Palmitoylated by ZDHHC3 in the Golgi regulates TLR9 trafficking from the Golgi to endosomes. Depalmitoylation by PPT1 controls the release of TLR9 from UNC93B1 in endosomes.</text>
</comment>
<comment type="similarity">
    <text evidence="6">Belongs to the Toll-like receptor family.</text>
</comment>
<proteinExistence type="evidence at transcript level"/>
<organism>
    <name type="scientific">Canis lupus familiaris</name>
    <name type="common">Dog</name>
    <name type="synonym">Canis familiaris</name>
    <dbReference type="NCBI Taxonomy" id="9615"/>
    <lineage>
        <taxon>Eukaryota</taxon>
        <taxon>Metazoa</taxon>
        <taxon>Chordata</taxon>
        <taxon>Craniata</taxon>
        <taxon>Vertebrata</taxon>
        <taxon>Euteleostomi</taxon>
        <taxon>Mammalia</taxon>
        <taxon>Eutheria</taxon>
        <taxon>Laurasiatheria</taxon>
        <taxon>Carnivora</taxon>
        <taxon>Caniformia</taxon>
        <taxon>Canidae</taxon>
        <taxon>Canis</taxon>
    </lineage>
</organism>
<evidence type="ECO:0000250" key="1">
    <source>
        <dbReference type="UniProtKB" id="Q2EEY0"/>
    </source>
</evidence>
<evidence type="ECO:0000250" key="2">
    <source>
        <dbReference type="UniProtKB" id="Q9EQU3"/>
    </source>
</evidence>
<evidence type="ECO:0000250" key="3">
    <source>
        <dbReference type="UniProtKB" id="Q9NR96"/>
    </source>
</evidence>
<evidence type="ECO:0000255" key="4"/>
<evidence type="ECO:0000255" key="5">
    <source>
        <dbReference type="PROSITE-ProRule" id="PRU00204"/>
    </source>
</evidence>
<evidence type="ECO:0000305" key="6"/>
<protein>
    <recommendedName>
        <fullName>Toll-like receptor 9</fullName>
    </recommendedName>
    <cdAntigenName>CD289</cdAntigenName>
</protein>
<gene>
    <name type="primary">TLR9</name>
</gene>
<feature type="signal peptide" evidence="4">
    <location>
        <begin position="1"/>
        <end position="25"/>
    </location>
</feature>
<feature type="chain" id="PRO_0000227007" description="Toll-like receptor 9">
    <location>
        <begin position="26"/>
        <end position="1032"/>
    </location>
</feature>
<feature type="topological domain" description="Extracellular" evidence="4">
    <location>
        <begin position="26"/>
        <end position="815"/>
    </location>
</feature>
<feature type="transmembrane region" description="Helical" evidence="4">
    <location>
        <begin position="816"/>
        <end position="836"/>
    </location>
</feature>
<feature type="topological domain" description="Cytoplasmic" evidence="4">
    <location>
        <begin position="837"/>
        <end position="1032"/>
    </location>
</feature>
<feature type="repeat" description="LRR 1">
    <location>
        <begin position="62"/>
        <end position="85"/>
    </location>
</feature>
<feature type="repeat" description="LRR 2">
    <location>
        <begin position="87"/>
        <end position="110"/>
    </location>
</feature>
<feature type="repeat" description="LRR 3">
    <location>
        <begin position="122"/>
        <end position="147"/>
    </location>
</feature>
<feature type="repeat" description="LRR 4">
    <location>
        <begin position="150"/>
        <end position="166"/>
    </location>
</feature>
<feature type="repeat" description="LRR 5">
    <location>
        <begin position="167"/>
        <end position="190"/>
    </location>
</feature>
<feature type="repeat" description="LRR 6">
    <location>
        <begin position="198"/>
        <end position="221"/>
    </location>
</feature>
<feature type="repeat" description="LRR 7">
    <location>
        <begin position="223"/>
        <end position="242"/>
    </location>
</feature>
<feature type="repeat" description="LRR 8">
    <location>
        <begin position="243"/>
        <end position="268"/>
    </location>
</feature>
<feature type="repeat" description="LRR 9">
    <location>
        <begin position="283"/>
        <end position="306"/>
    </location>
</feature>
<feature type="repeat" description="LRR 10">
    <location>
        <begin position="308"/>
        <end position="332"/>
    </location>
</feature>
<feature type="repeat" description="LRR 11">
    <location>
        <begin position="333"/>
        <end position="356"/>
    </location>
</feature>
<feature type="repeat" description="LRR 12">
    <location>
        <begin position="363"/>
        <end position="386"/>
    </location>
</feature>
<feature type="repeat" description="LRR 13">
    <location>
        <begin position="390"/>
        <end position="413"/>
    </location>
</feature>
<feature type="repeat" description="LRR 14">
    <location>
        <begin position="415"/>
        <end position="440"/>
    </location>
</feature>
<feature type="repeat" description="LRR 15">
    <location>
        <begin position="472"/>
        <end position="496"/>
    </location>
</feature>
<feature type="repeat" description="LRR 16">
    <location>
        <begin position="498"/>
        <end position="521"/>
    </location>
</feature>
<feature type="repeat" description="LRR 17">
    <location>
        <begin position="522"/>
        <end position="545"/>
    </location>
</feature>
<feature type="repeat" description="LRR 18">
    <location>
        <begin position="547"/>
        <end position="574"/>
    </location>
</feature>
<feature type="repeat" description="LRR 19">
    <location>
        <begin position="576"/>
        <end position="600"/>
    </location>
</feature>
<feature type="repeat" description="LRR 20">
    <location>
        <begin position="602"/>
        <end position="624"/>
    </location>
</feature>
<feature type="repeat" description="LRR 21">
    <location>
        <begin position="629"/>
        <end position="652"/>
    </location>
</feature>
<feature type="repeat" description="LRR 22">
    <location>
        <begin position="654"/>
        <end position="677"/>
    </location>
</feature>
<feature type="repeat" description="LRR 23">
    <location>
        <begin position="678"/>
        <end position="701"/>
    </location>
</feature>
<feature type="repeat" description="LRR 24">
    <location>
        <begin position="703"/>
        <end position="725"/>
    </location>
</feature>
<feature type="repeat" description="LRR 25">
    <location>
        <begin position="726"/>
        <end position="749"/>
    </location>
</feature>
<feature type="repeat" description="LRR 26">
    <location>
        <begin position="751"/>
        <end position="774"/>
    </location>
</feature>
<feature type="domain" description="TIR" evidence="5">
    <location>
        <begin position="868"/>
        <end position="1013"/>
    </location>
</feature>
<feature type="binding site" evidence="1">
    <location>
        <begin position="47"/>
        <end position="51"/>
    </location>
    <ligand>
        <name>DNA</name>
        <dbReference type="ChEBI" id="CHEBI:16991"/>
        <note>CpG-containing DNA</note>
    </ligand>
</feature>
<feature type="binding site" evidence="1">
    <location>
        <begin position="72"/>
        <end position="77"/>
    </location>
    <ligand>
        <name>DNA</name>
        <dbReference type="ChEBI" id="CHEBI:16991"/>
        <note>CpG-containing DNA</note>
    </ligand>
</feature>
<feature type="binding site" evidence="1">
    <location>
        <begin position="95"/>
        <end position="109"/>
    </location>
    <ligand>
        <name>DNA</name>
        <dbReference type="ChEBI" id="CHEBI:16991"/>
        <note>CpG-containing DNA</note>
    </ligand>
</feature>
<feature type="binding site" evidence="1">
    <location>
        <position position="132"/>
    </location>
    <ligand>
        <name>DNA</name>
        <dbReference type="ChEBI" id="CHEBI:16991"/>
        <note>CpG-containing DNA</note>
    </ligand>
</feature>
<feature type="binding site" evidence="1">
    <location>
        <position position="152"/>
    </location>
    <ligand>
        <name>DNA</name>
        <dbReference type="ChEBI" id="CHEBI:16991"/>
        <note>CpG-containing DNA</note>
    </ligand>
</feature>
<feature type="binding site" evidence="1">
    <location>
        <begin position="179"/>
        <end position="181"/>
    </location>
    <ligand>
        <name>DNA</name>
        <dbReference type="ChEBI" id="CHEBI:16991"/>
        <note>CpG-containing DNA</note>
    </ligand>
</feature>
<feature type="binding site" evidence="1">
    <location>
        <position position="208"/>
    </location>
    <ligand>
        <name>DNA</name>
        <dbReference type="ChEBI" id="CHEBI:16991"/>
        <note>CpG-containing DNA</note>
    </ligand>
</feature>
<feature type="binding site" evidence="1">
    <location>
        <position position="262"/>
    </location>
    <ligand>
        <name>DNA</name>
        <dbReference type="ChEBI" id="CHEBI:16991"/>
        <note>CpG-containing DNA</note>
    </ligand>
</feature>
<feature type="lipid moiety-binding region" description="S-palmitoyl cysteine" evidence="3">
    <location>
        <position position="258"/>
    </location>
</feature>
<feature type="lipid moiety-binding region" description="S-palmitoyl cysteine" evidence="3">
    <location>
        <position position="265"/>
    </location>
</feature>
<feature type="glycosylation site" description="N-linked (GlcNAc...) asparagine" evidence="4">
    <location>
        <position position="64"/>
    </location>
</feature>
<feature type="glycosylation site" description="N-linked (GlcNAc...) asparagine" evidence="4">
    <location>
        <position position="129"/>
    </location>
</feature>
<feature type="glycosylation site" description="N-linked (GlcNAc...) asparagine" evidence="4">
    <location>
        <position position="200"/>
    </location>
</feature>
<feature type="glycosylation site" description="N-linked (GlcNAc...) asparagine" evidence="4">
    <location>
        <position position="210"/>
    </location>
</feature>
<feature type="glycosylation site" description="N-linked (GlcNAc...) asparagine" evidence="4">
    <location>
        <position position="242"/>
    </location>
</feature>
<feature type="glycosylation site" description="N-linked (GlcNAc...) asparagine" evidence="4">
    <location>
        <position position="340"/>
    </location>
</feature>
<feature type="glycosylation site" description="N-linked (GlcNAc...) asparagine" evidence="4">
    <location>
        <position position="476"/>
    </location>
</feature>
<feature type="glycosylation site" description="N-linked (GlcNAc...) asparagine" evidence="4">
    <location>
        <position position="515"/>
    </location>
</feature>
<feature type="glycosylation site" description="N-linked (GlcNAc...) asparagine" evidence="4">
    <location>
        <position position="569"/>
    </location>
</feature>
<feature type="glycosylation site" description="N-linked (GlcNAc...) asparagine" evidence="4">
    <location>
        <position position="671"/>
    </location>
</feature>
<feature type="glycosylation site" description="N-linked (GlcNAc...) asparagine" evidence="4">
    <location>
        <position position="696"/>
    </location>
</feature>
<feature type="glycosylation site" description="N-linked (GlcNAc...) asparagine" evidence="4">
    <location>
        <position position="701"/>
    </location>
</feature>
<feature type="glycosylation site" description="N-linked (GlcNAc...) asparagine" evidence="4">
    <location>
        <position position="733"/>
    </location>
</feature>
<feature type="disulfide bond" evidence="1">
    <location>
        <begin position="35"/>
        <end position="45"/>
    </location>
</feature>
<feature type="disulfide bond" evidence="1">
    <location>
        <begin position="98"/>
        <end position="110"/>
    </location>
</feature>
<feature type="disulfide bond" evidence="1">
    <location>
        <begin position="178"/>
        <end position="184"/>
    </location>
</feature>
<feature type="disulfide bond" evidence="1">
    <location>
        <begin position="255"/>
        <end position="268"/>
    </location>
</feature>
<feature type="disulfide bond" evidence="1">
    <location>
        <begin position="258"/>
        <end position="265"/>
    </location>
</feature>
<feature type="disulfide bond" evidence="1">
    <location>
        <begin position="472"/>
        <end position="502"/>
    </location>
</feature>
<feature type="disulfide bond" evidence="1">
    <location>
        <begin position="766"/>
        <end position="792"/>
    </location>
</feature>
<feature type="disulfide bond" evidence="1">
    <location>
        <begin position="768"/>
        <end position="811"/>
    </location>
</feature>
<accession>Q5I2M8</accession>
<name>TLR9_CANLF</name>
<sequence>MGPCRGALHPLSLLVQAAALALALAQGTLPAFLPCELQPHGLVNCNWLFLKSVPRFSAAAPRGNVTSLSLYSNRIHHLHDYDFVHFVHLRRLNLKWNCPPASLSPMHFPCHMTIEPNTFLAVPTLEDLNLSYNSITTVPALPSSLVSLSLSRTNILVLDPATLAGLYALRFLFLDGNCYYKNPCQQALQVAPGALLGLGNLTHLSLKYNNLTVVPRGLPPSLEYLLLSYNHIITLAPEDLANLTALRVLDVGGNCRRCDHARNPCRECPKGFPQLHPNTFGHLSHLEGLVLRDSSLYSLDPRWFHGLGNLMVLDLSENFLYDCITKTKAFYGLARLRRLNLSFNYHKKVSFAHLHLASSFGSLLSLQELDIHGIFFRSLSKTTLQSLAHLPMLQRLHLQLNFISQAQLSIFGAFPGLRYVDLSDNRISGAAEPAAATGEVEADCGERVWPQSRDLALGPLGTPGSEAFMPSCRTLNFTLDLSRNNLVTVQPEMFVRLARLQCLGLSHNSISQAVNGSQFVPLSNLRVLDLSHNKLDLYHGRSFTELPRLEALDLSYNSQPFSMRGVGHNLSFVAQLPALRYLSLAHNGIHSRVSQQLRSASLRALDFSGNTLSQMWAEGDLYLRFFQGLRSLVQLDLSQNRLHTLLPRNLDNLPKSLRLLRLRDNYLAFFNWSSLALLPKLEALDLAGNQLKALSNGSLPNGTQLQRLDLSGNSIGFVVPSFFALAVRLRELNLSANALKTVEPSWFGSLAGALKVLDVTANPLHCACGATFVDFLLEVQAAVPGLPSRVKCGSPGQLQGRSIFAQDLRLCLDEALSWVCFSLSLLAVALSLAVPMLHQLCGWDLWYCFHLCLAWLPRRGRRRGVDALAYDAFVVFDKAQSSVADWVYNELRVQLEERRGRRALRLCLEERDWVPGKTLFENLWASVYSSRKTLFVLARTDRVSGLLRASFLLAQQRLLEDRKDVVVLVILCPDAHRSRYVRLRQRLCRQSVLLWPHQPSGQRSFWAQLGTALTRDNRHFYNQNFCRGPTTA</sequence>